<comment type="function">
    <text evidence="1">Bidirectionally degrades single-stranded DNA into large acid-insoluble oligonucleotides, which are then degraded further into small acid-soluble oligonucleotides.</text>
</comment>
<comment type="catalytic activity">
    <reaction evidence="1">
        <text>Exonucleolytic cleavage in either 5'- to 3'- or 3'- to 5'-direction to yield nucleoside 5'-phosphates.</text>
        <dbReference type="EC" id="3.1.11.6"/>
    </reaction>
</comment>
<comment type="subunit">
    <text evidence="1">Heterooligomer composed of large and small subunits.</text>
</comment>
<comment type="subcellular location">
    <subcellularLocation>
        <location evidence="1">Cytoplasm</location>
    </subcellularLocation>
</comment>
<comment type="similarity">
    <text evidence="1">Belongs to the XseA family.</text>
</comment>
<protein>
    <recommendedName>
        <fullName evidence="1">Exodeoxyribonuclease 7 large subunit</fullName>
        <ecNumber evidence="1">3.1.11.6</ecNumber>
    </recommendedName>
    <alternativeName>
        <fullName evidence="1">Exodeoxyribonuclease VII large subunit</fullName>
        <shortName evidence="1">Exonuclease VII large subunit</shortName>
    </alternativeName>
</protein>
<dbReference type="EC" id="3.1.11.6" evidence="1"/>
<dbReference type="EMBL" id="CU928161">
    <property type="protein sequence ID" value="CAR03948.1"/>
    <property type="molecule type" value="Genomic_DNA"/>
</dbReference>
<dbReference type="RefSeq" id="WP_000937882.1">
    <property type="nucleotide sequence ID" value="NC_011742.1"/>
</dbReference>
<dbReference type="SMR" id="B7MHZ0"/>
<dbReference type="KEGG" id="ecz:ECS88_2681"/>
<dbReference type="HOGENOM" id="CLU_023625_3_1_6"/>
<dbReference type="Proteomes" id="UP000000747">
    <property type="component" value="Chromosome"/>
</dbReference>
<dbReference type="GO" id="GO:0005737">
    <property type="term" value="C:cytoplasm"/>
    <property type="evidence" value="ECO:0007669"/>
    <property type="project" value="UniProtKB-SubCell"/>
</dbReference>
<dbReference type="GO" id="GO:0009318">
    <property type="term" value="C:exodeoxyribonuclease VII complex"/>
    <property type="evidence" value="ECO:0007669"/>
    <property type="project" value="InterPro"/>
</dbReference>
<dbReference type="GO" id="GO:0008855">
    <property type="term" value="F:exodeoxyribonuclease VII activity"/>
    <property type="evidence" value="ECO:0007669"/>
    <property type="project" value="UniProtKB-UniRule"/>
</dbReference>
<dbReference type="GO" id="GO:0003676">
    <property type="term" value="F:nucleic acid binding"/>
    <property type="evidence" value="ECO:0007669"/>
    <property type="project" value="InterPro"/>
</dbReference>
<dbReference type="GO" id="GO:0006308">
    <property type="term" value="P:DNA catabolic process"/>
    <property type="evidence" value="ECO:0007669"/>
    <property type="project" value="UniProtKB-UniRule"/>
</dbReference>
<dbReference type="CDD" id="cd04489">
    <property type="entry name" value="ExoVII_LU_OBF"/>
    <property type="match status" value="1"/>
</dbReference>
<dbReference type="HAMAP" id="MF_00378">
    <property type="entry name" value="Exonuc_7_L"/>
    <property type="match status" value="1"/>
</dbReference>
<dbReference type="InterPro" id="IPR003753">
    <property type="entry name" value="Exonuc_VII_L"/>
</dbReference>
<dbReference type="InterPro" id="IPR020579">
    <property type="entry name" value="Exonuc_VII_lsu_C"/>
</dbReference>
<dbReference type="InterPro" id="IPR025824">
    <property type="entry name" value="OB-fold_nuc-bd_dom"/>
</dbReference>
<dbReference type="NCBIfam" id="TIGR00237">
    <property type="entry name" value="xseA"/>
    <property type="match status" value="1"/>
</dbReference>
<dbReference type="PANTHER" id="PTHR30008">
    <property type="entry name" value="EXODEOXYRIBONUCLEASE 7 LARGE SUBUNIT"/>
    <property type="match status" value="1"/>
</dbReference>
<dbReference type="PANTHER" id="PTHR30008:SF0">
    <property type="entry name" value="EXODEOXYRIBONUCLEASE 7 LARGE SUBUNIT"/>
    <property type="match status" value="1"/>
</dbReference>
<dbReference type="Pfam" id="PF02601">
    <property type="entry name" value="Exonuc_VII_L"/>
    <property type="match status" value="1"/>
</dbReference>
<dbReference type="Pfam" id="PF13742">
    <property type="entry name" value="tRNA_anti_2"/>
    <property type="match status" value="1"/>
</dbReference>
<organism>
    <name type="scientific">Escherichia coli O45:K1 (strain S88 / ExPEC)</name>
    <dbReference type="NCBI Taxonomy" id="585035"/>
    <lineage>
        <taxon>Bacteria</taxon>
        <taxon>Pseudomonadati</taxon>
        <taxon>Pseudomonadota</taxon>
        <taxon>Gammaproteobacteria</taxon>
        <taxon>Enterobacterales</taxon>
        <taxon>Enterobacteriaceae</taxon>
        <taxon>Escherichia</taxon>
    </lineage>
</organism>
<sequence length="458" mass="51554">MLPSQSPAIFTVSRLNQTVRLLLEHEMGQVWISGEISNFTQPASGHWYFTLKDDTAQVRCAMFRNSNRRVTFRPQHGQQVLVRANITLYEPRGDYQIIVESMQPAGEGLLQLKYEQLKAKLQAEGLFDLQYKKSLPSPAHCVGVITSKTGAALHDILHVLKRRDPSLPVIIYPTAVQGDDAPGQIVRAIELANQRNECDVLIVGRGGGSLEDLWSFNDERVARAIFASRIPIVSAVGHETDVTIADFVADLRAPTPSAAAEVVSRNQQELLRQVQSTHQRLEMAMDYYLANRTRRFTQIHHRLQQQHPQLRLARQQTMLERLQKRMSFALESQLKRAGQQQQRLTRQLVQQNPQSRIHRAQTRIQQLEYRLAETLRAQLSATRERFGNAVTHLEAVSPLSTLARGYSVTSAADGAVLKQVKQVKVGETLTTRLGDGVVISEVSAVTKTRKSRKKTSNP</sequence>
<keyword id="KW-0963">Cytoplasm</keyword>
<keyword id="KW-0269">Exonuclease</keyword>
<keyword id="KW-0378">Hydrolase</keyword>
<keyword id="KW-0540">Nuclease</keyword>
<keyword id="KW-1185">Reference proteome</keyword>
<proteinExistence type="inferred from homology"/>
<feature type="chain" id="PRO_1000122053" description="Exodeoxyribonuclease 7 large subunit">
    <location>
        <begin position="1"/>
        <end position="458"/>
    </location>
</feature>
<reference key="1">
    <citation type="journal article" date="2009" name="PLoS Genet.">
        <title>Organised genome dynamics in the Escherichia coli species results in highly diverse adaptive paths.</title>
        <authorList>
            <person name="Touchon M."/>
            <person name="Hoede C."/>
            <person name="Tenaillon O."/>
            <person name="Barbe V."/>
            <person name="Baeriswyl S."/>
            <person name="Bidet P."/>
            <person name="Bingen E."/>
            <person name="Bonacorsi S."/>
            <person name="Bouchier C."/>
            <person name="Bouvet O."/>
            <person name="Calteau A."/>
            <person name="Chiapello H."/>
            <person name="Clermont O."/>
            <person name="Cruveiller S."/>
            <person name="Danchin A."/>
            <person name="Diard M."/>
            <person name="Dossat C."/>
            <person name="Karoui M.E."/>
            <person name="Frapy E."/>
            <person name="Garry L."/>
            <person name="Ghigo J.M."/>
            <person name="Gilles A.M."/>
            <person name="Johnson J."/>
            <person name="Le Bouguenec C."/>
            <person name="Lescat M."/>
            <person name="Mangenot S."/>
            <person name="Martinez-Jehanne V."/>
            <person name="Matic I."/>
            <person name="Nassif X."/>
            <person name="Oztas S."/>
            <person name="Petit M.A."/>
            <person name="Pichon C."/>
            <person name="Rouy Z."/>
            <person name="Ruf C.S."/>
            <person name="Schneider D."/>
            <person name="Tourret J."/>
            <person name="Vacherie B."/>
            <person name="Vallenet D."/>
            <person name="Medigue C."/>
            <person name="Rocha E.P.C."/>
            <person name="Denamur E."/>
        </authorList>
    </citation>
    <scope>NUCLEOTIDE SEQUENCE [LARGE SCALE GENOMIC DNA]</scope>
    <source>
        <strain>S88 / ExPEC</strain>
    </source>
</reference>
<evidence type="ECO:0000255" key="1">
    <source>
        <dbReference type="HAMAP-Rule" id="MF_00378"/>
    </source>
</evidence>
<accession>B7MHZ0</accession>
<name>EX7L_ECO45</name>
<gene>
    <name evidence="1" type="primary">xseA</name>
    <name type="ordered locus">ECS88_2681</name>
</gene>